<protein>
    <recommendedName>
        <fullName evidence="1">Protein GET1</fullName>
    </recommendedName>
    <alternativeName>
        <fullName evidence="1">Guided entry of tail-anchored proteins 1</fullName>
    </alternativeName>
</protein>
<organism>
    <name type="scientific">Chaetomium thermophilum (strain DSM 1495 / CBS 144.50 / IMI 039719)</name>
    <name type="common">Thermochaetoides thermophila</name>
    <dbReference type="NCBI Taxonomy" id="759272"/>
    <lineage>
        <taxon>Eukaryota</taxon>
        <taxon>Fungi</taxon>
        <taxon>Dikarya</taxon>
        <taxon>Ascomycota</taxon>
        <taxon>Pezizomycotina</taxon>
        <taxon>Sordariomycetes</taxon>
        <taxon>Sordariomycetidae</taxon>
        <taxon>Sordariales</taxon>
        <taxon>Chaetomiaceae</taxon>
        <taxon>Thermochaetoides</taxon>
    </lineage>
</organism>
<proteinExistence type="evidence at protein level"/>
<keyword id="KW-0002">3D-structure</keyword>
<keyword id="KW-0175">Coiled coil</keyword>
<keyword id="KW-0256">Endoplasmic reticulum</keyword>
<keyword id="KW-0472">Membrane</keyword>
<keyword id="KW-1185">Reference proteome</keyword>
<keyword id="KW-0812">Transmembrane</keyword>
<keyword id="KW-1133">Transmembrane helix</keyword>
<keyword id="KW-0813">Transport</keyword>
<gene>
    <name evidence="1" type="primary">GET1</name>
    <name type="ORF">CTHT_0013590</name>
</gene>
<dbReference type="EMBL" id="GL988039">
    <property type="protein sequence ID" value="EGS22882.1"/>
    <property type="status" value="ALT_SEQ"/>
    <property type="molecule type" value="Genomic_DNA"/>
</dbReference>
<dbReference type="RefSeq" id="XP_006691874.1">
    <property type="nucleotide sequence ID" value="XM_006691811.1"/>
</dbReference>
<dbReference type="PDB" id="8ODU">
    <property type="method" value="EM"/>
    <property type="resolution" value="5.00 A"/>
    <property type="chains" value="C/D=1-209"/>
</dbReference>
<dbReference type="PDB" id="8ODV">
    <property type="method" value="EM"/>
    <property type="resolution" value="4.70 A"/>
    <property type="chains" value="C/D=1-209"/>
</dbReference>
<dbReference type="PDBsum" id="8ODU"/>
<dbReference type="PDBsum" id="8ODV"/>
<dbReference type="EMDB" id="EMD-16817"/>
<dbReference type="EMDB" id="EMD-16819"/>
<dbReference type="SMR" id="G0S1H2"/>
<dbReference type="STRING" id="759272.G0S1H2"/>
<dbReference type="GeneID" id="18255397"/>
<dbReference type="KEGG" id="cthr:CTHT_0013590"/>
<dbReference type="eggNOG" id="KOG4253">
    <property type="taxonomic scope" value="Eukaryota"/>
</dbReference>
<dbReference type="HOGENOM" id="CLU_478271_0_0_1"/>
<dbReference type="OrthoDB" id="4218123at2759"/>
<dbReference type="Proteomes" id="UP000008066">
    <property type="component" value="Unassembled WGS sequence"/>
</dbReference>
<dbReference type="GO" id="GO:0005789">
    <property type="term" value="C:endoplasmic reticulum membrane"/>
    <property type="evidence" value="ECO:0007669"/>
    <property type="project" value="UniProtKB-SubCell"/>
</dbReference>
<dbReference type="GO" id="GO:0043529">
    <property type="term" value="C:GET complex"/>
    <property type="evidence" value="ECO:0007669"/>
    <property type="project" value="InterPro"/>
</dbReference>
<dbReference type="GO" id="GO:0043495">
    <property type="term" value="F:protein-membrane adaptor activity"/>
    <property type="evidence" value="ECO:0007669"/>
    <property type="project" value="TreeGrafter"/>
</dbReference>
<dbReference type="GO" id="GO:0071816">
    <property type="term" value="P:tail-anchored membrane protein insertion into ER membrane"/>
    <property type="evidence" value="ECO:0007669"/>
    <property type="project" value="InterPro"/>
</dbReference>
<dbReference type="FunFam" id="1.10.287.660:FF:000006">
    <property type="entry name" value="Protein GET1"/>
    <property type="match status" value="1"/>
</dbReference>
<dbReference type="Gene3D" id="1.10.287.660">
    <property type="entry name" value="Helix hairpin bin"/>
    <property type="match status" value="1"/>
</dbReference>
<dbReference type="HAMAP" id="MF_03113">
    <property type="entry name" value="Get1"/>
    <property type="match status" value="1"/>
</dbReference>
<dbReference type="InterPro" id="IPR028945">
    <property type="entry name" value="Get1"/>
</dbReference>
<dbReference type="InterPro" id="IPR027538">
    <property type="entry name" value="Get1_fungi"/>
</dbReference>
<dbReference type="InterPro" id="IPR029012">
    <property type="entry name" value="Helix_hairpin_bin_sf"/>
</dbReference>
<dbReference type="PANTHER" id="PTHR42650:SF1">
    <property type="entry name" value="GUIDED ENTRY OF TAIL-ANCHORED PROTEINS FACTOR 1"/>
    <property type="match status" value="1"/>
</dbReference>
<dbReference type="PANTHER" id="PTHR42650">
    <property type="entry name" value="TAIL-ANCHORED PROTEIN INSERTION RECEPTOR WRB"/>
    <property type="match status" value="1"/>
</dbReference>
<dbReference type="Pfam" id="PF04420">
    <property type="entry name" value="CHD5"/>
    <property type="match status" value="1"/>
</dbReference>
<feature type="chain" id="PRO_5003409209" description="Protein GET1">
    <location>
        <begin position="1"/>
        <end position="209"/>
    </location>
</feature>
<feature type="topological domain" description="Lumenal" evidence="1">
    <location>
        <begin position="1"/>
        <end position="3"/>
    </location>
</feature>
<feature type="transmembrane region" description="Helical" evidence="1">
    <location>
        <begin position="4"/>
        <end position="23"/>
    </location>
</feature>
<feature type="topological domain" description="Cytoplasmic" evidence="1">
    <location>
        <begin position="24"/>
        <end position="110"/>
    </location>
</feature>
<feature type="transmembrane region" description="Helical" evidence="1">
    <location>
        <begin position="111"/>
        <end position="131"/>
    </location>
</feature>
<feature type="topological domain" description="Lumenal" evidence="1">
    <location>
        <begin position="132"/>
        <end position="155"/>
    </location>
</feature>
<feature type="transmembrane region" description="Helical" evidence="1">
    <location>
        <begin position="156"/>
        <end position="172"/>
    </location>
</feature>
<feature type="topological domain" description="Cytoplasmic" evidence="1">
    <location>
        <begin position="173"/>
        <end position="209"/>
    </location>
</feature>
<feature type="region of interest" description="Disordered" evidence="2">
    <location>
        <begin position="188"/>
        <end position="209"/>
    </location>
</feature>
<feature type="coiled-coil region" evidence="1">
    <location>
        <begin position="74"/>
        <end position="101"/>
    </location>
</feature>
<evidence type="ECO:0000255" key="1">
    <source>
        <dbReference type="HAMAP-Rule" id="MF_03113"/>
    </source>
</evidence>
<evidence type="ECO:0000256" key="2">
    <source>
        <dbReference type="SAM" id="MobiDB-lite"/>
    </source>
</evidence>
<evidence type="ECO:0000305" key="3"/>
<sequence length="209" mass="24018">MSLLLVIFLLELVVQLVNTIGAKTINNLLWRFYLSIPGSPLAKDFAEQRAKQKEYLQVRHDLNATSSQDEFAKWARLQRKHDKLMDELEKKKSQLDAHRTSFSRKLTIYRWILTRGMQWFLCFWFSSQPMFWLPYGWFPYWVEWLVSFPNAPMGSVSIVVWQSACSGVLALVIEAVMAVVRYTGGTGMQKQRQPVPAAGGAPGTSKKDL</sequence>
<name>GET1_CHATD</name>
<accession>G0S1H2</accession>
<comment type="function">
    <text evidence="1">Required for the post-translational delivery of tail-anchored (TA) proteins to the endoplasmic reticulum. Acts as a membrane receptor for soluble GET3, which recognizes and selectively binds the transmembrane domain of TA proteins in the cytosol.</text>
</comment>
<comment type="subunit">
    <text evidence="1">Interacts with GET3.</text>
</comment>
<comment type="subcellular location">
    <subcellularLocation>
        <location evidence="1">Endoplasmic reticulum membrane</location>
        <topology evidence="1">Multi-pass membrane protein</topology>
    </subcellularLocation>
</comment>
<comment type="similarity">
    <text evidence="1">Belongs to the WRB/GET1 family.</text>
</comment>
<comment type="sequence caution" evidence="3">
    <conflict type="erroneous gene model prediction">
        <sequence resource="EMBL-CDS" id="EGS22882"/>
    </conflict>
</comment>
<reference key="1">
    <citation type="journal article" date="2011" name="Cell">
        <title>Insight into structure and assembly of the nuclear pore complex by utilizing the genome of a eukaryotic thermophile.</title>
        <authorList>
            <person name="Amlacher S."/>
            <person name="Sarges P."/>
            <person name="Flemming D."/>
            <person name="van Noort V."/>
            <person name="Kunze R."/>
            <person name="Devos D.P."/>
            <person name="Arumugam M."/>
            <person name="Bork P."/>
            <person name="Hurt E."/>
        </authorList>
    </citation>
    <scope>NUCLEOTIDE SEQUENCE [LARGE SCALE GENOMIC DNA]</scope>
    <source>
        <strain>DSM 1495 / CBS 144.50 / IMI 039719</strain>
    </source>
</reference>